<name>YBJL_SALPC</name>
<feature type="chain" id="PRO_1000148996" description="Putative transport protein YbjL">
    <location>
        <begin position="1"/>
        <end position="561"/>
    </location>
</feature>
<feature type="transmembrane region" description="Helical" evidence="1">
    <location>
        <begin position="8"/>
        <end position="28"/>
    </location>
</feature>
<feature type="transmembrane region" description="Helical" evidence="1">
    <location>
        <begin position="32"/>
        <end position="52"/>
    </location>
</feature>
<feature type="transmembrane region" description="Helical" evidence="1">
    <location>
        <begin position="66"/>
        <end position="86"/>
    </location>
</feature>
<feature type="transmembrane region" description="Helical" evidence="1">
    <location>
        <begin position="94"/>
        <end position="114"/>
    </location>
</feature>
<feature type="transmembrane region" description="Helical" evidence="1">
    <location>
        <begin position="158"/>
        <end position="178"/>
    </location>
</feature>
<feature type="transmembrane region" description="Helical" evidence="1">
    <location>
        <begin position="383"/>
        <end position="403"/>
    </location>
</feature>
<feature type="transmembrane region" description="Helical" evidence="1">
    <location>
        <begin position="406"/>
        <end position="426"/>
    </location>
</feature>
<feature type="transmembrane region" description="Helical" evidence="1">
    <location>
        <begin position="447"/>
        <end position="467"/>
    </location>
</feature>
<feature type="transmembrane region" description="Helical" evidence="1">
    <location>
        <begin position="475"/>
        <end position="495"/>
    </location>
</feature>
<feature type="transmembrane region" description="Helical" evidence="1">
    <location>
        <begin position="540"/>
        <end position="560"/>
    </location>
</feature>
<feature type="domain" description="RCK C-terminal 1" evidence="1">
    <location>
        <begin position="200"/>
        <end position="288"/>
    </location>
</feature>
<feature type="domain" description="RCK C-terminal 2" evidence="1">
    <location>
        <begin position="292"/>
        <end position="373"/>
    </location>
</feature>
<accession>C0PXM8</accession>
<dbReference type="EMBL" id="CP000857">
    <property type="protein sequence ID" value="ACN45078.1"/>
    <property type="molecule type" value="Genomic_DNA"/>
</dbReference>
<dbReference type="RefSeq" id="WP_001024852.1">
    <property type="nucleotide sequence ID" value="NC_012125.1"/>
</dbReference>
<dbReference type="SMR" id="C0PXM8"/>
<dbReference type="KEGG" id="sei:SPC_0909"/>
<dbReference type="HOGENOM" id="CLU_035023_2_2_6"/>
<dbReference type="Proteomes" id="UP000001599">
    <property type="component" value="Chromosome"/>
</dbReference>
<dbReference type="GO" id="GO:0005886">
    <property type="term" value="C:plasma membrane"/>
    <property type="evidence" value="ECO:0007669"/>
    <property type="project" value="UniProtKB-SubCell"/>
</dbReference>
<dbReference type="GO" id="GO:0008324">
    <property type="term" value="F:monoatomic cation transmembrane transporter activity"/>
    <property type="evidence" value="ECO:0007669"/>
    <property type="project" value="InterPro"/>
</dbReference>
<dbReference type="GO" id="GO:0006813">
    <property type="term" value="P:potassium ion transport"/>
    <property type="evidence" value="ECO:0007669"/>
    <property type="project" value="InterPro"/>
</dbReference>
<dbReference type="FunFam" id="3.30.70.1450:FF:000003">
    <property type="entry name" value="Putative transport protein YbjL"/>
    <property type="match status" value="1"/>
</dbReference>
<dbReference type="Gene3D" id="3.30.70.1450">
    <property type="entry name" value="Regulator of K+ conductance, C-terminal domain"/>
    <property type="match status" value="1"/>
</dbReference>
<dbReference type="HAMAP" id="MF_01015">
    <property type="entry name" value="YbjL"/>
    <property type="match status" value="1"/>
</dbReference>
<dbReference type="InterPro" id="IPR050144">
    <property type="entry name" value="AAE_transporter"/>
</dbReference>
<dbReference type="InterPro" id="IPR006037">
    <property type="entry name" value="RCK_C"/>
</dbReference>
<dbReference type="InterPro" id="IPR036721">
    <property type="entry name" value="RCK_C_sf"/>
</dbReference>
<dbReference type="InterPro" id="IPR023017">
    <property type="entry name" value="Transp_YbjL_put"/>
</dbReference>
<dbReference type="InterPro" id="IPR006512">
    <property type="entry name" value="YidE_YbjL"/>
</dbReference>
<dbReference type="NCBIfam" id="NF003440">
    <property type="entry name" value="PRK04972.1"/>
    <property type="match status" value="1"/>
</dbReference>
<dbReference type="NCBIfam" id="TIGR01625">
    <property type="entry name" value="YidE_YbjL_dupl"/>
    <property type="match status" value="2"/>
</dbReference>
<dbReference type="PANTHER" id="PTHR30445">
    <property type="entry name" value="K(+)_H(+) ANTIPORTER SUBUNIT KHTT"/>
    <property type="match status" value="1"/>
</dbReference>
<dbReference type="PANTHER" id="PTHR30445:SF10">
    <property type="entry name" value="TRANSPORT PROTEIN YBJL-RELATED"/>
    <property type="match status" value="1"/>
</dbReference>
<dbReference type="Pfam" id="PF06826">
    <property type="entry name" value="Asp-Al_Ex"/>
    <property type="match status" value="2"/>
</dbReference>
<dbReference type="Pfam" id="PF02080">
    <property type="entry name" value="TrkA_C"/>
    <property type="match status" value="2"/>
</dbReference>
<dbReference type="SUPFAM" id="SSF116726">
    <property type="entry name" value="TrkA C-terminal domain-like"/>
    <property type="match status" value="2"/>
</dbReference>
<dbReference type="PROSITE" id="PS51202">
    <property type="entry name" value="RCK_C"/>
    <property type="match status" value="2"/>
</dbReference>
<organism>
    <name type="scientific">Salmonella paratyphi C (strain RKS4594)</name>
    <dbReference type="NCBI Taxonomy" id="476213"/>
    <lineage>
        <taxon>Bacteria</taxon>
        <taxon>Pseudomonadati</taxon>
        <taxon>Pseudomonadota</taxon>
        <taxon>Gammaproteobacteria</taxon>
        <taxon>Enterobacterales</taxon>
        <taxon>Enterobacteriaceae</taxon>
        <taxon>Salmonella</taxon>
    </lineage>
</organism>
<evidence type="ECO:0000255" key="1">
    <source>
        <dbReference type="HAMAP-Rule" id="MF_01015"/>
    </source>
</evidence>
<proteinExistence type="inferred from homology"/>
<keyword id="KW-1003">Cell membrane</keyword>
<keyword id="KW-0472">Membrane</keyword>
<keyword id="KW-0677">Repeat</keyword>
<keyword id="KW-0812">Transmembrane</keyword>
<keyword id="KW-1133">Transmembrane helix</keyword>
<keyword id="KW-0813">Transport</keyword>
<reference key="1">
    <citation type="journal article" date="2009" name="PLoS ONE">
        <title>Salmonella paratyphi C: genetic divergence from Salmonella choleraesuis and pathogenic convergence with Salmonella typhi.</title>
        <authorList>
            <person name="Liu W.-Q."/>
            <person name="Feng Y."/>
            <person name="Wang Y."/>
            <person name="Zou Q.-H."/>
            <person name="Chen F."/>
            <person name="Guo J.-T."/>
            <person name="Peng Y.-H."/>
            <person name="Jin Y."/>
            <person name="Li Y.-G."/>
            <person name="Hu S.-N."/>
            <person name="Johnston R.N."/>
            <person name="Liu G.-R."/>
            <person name="Liu S.-L."/>
        </authorList>
    </citation>
    <scope>NUCLEOTIDE SEQUENCE [LARGE SCALE GENOMIC DNA]</scope>
    <source>
        <strain>RKS4594</strain>
    </source>
</reference>
<comment type="subcellular location">
    <subcellularLocation>
        <location evidence="1">Cell membrane</location>
        <topology evidence="1">Multi-pass membrane protein</topology>
    </subcellularLocation>
</comment>
<comment type="similarity">
    <text evidence="1">Belongs to the AAE transporter (TC 2.A.81) family. YbjL subfamily.</text>
</comment>
<gene>
    <name evidence="1" type="primary">ybjL</name>
    <name type="ordered locus">SPC_0909</name>
</gene>
<sequence>MNINVADLLNGNYILLLFVVLALGLCLGKLRLGSVQLGNSIGVLVVSLLLGQQHFSINTDALNLGFMLFIFCVGVEAGPNFFSIFFRDGKNYLMLALVMVGSALLIALGLGKLFGWDIGLTAGMLAGSMTSTPVLVGAGDTLRHSGIASTQLSSALDNLSLGYALTYLIGLVSLIVGARYLPKLQHQDLQTSAQQIARERGLDTDANRKVYLPVIRAYRVGPELVAWTDGKNLRELGIYRQTGCYIERIRRNGILANPDGDAVLQMGDEIALVGYPDAHARLDPSFRNGKEVFDRDLLDMRIVTEEIVVKNHNAVGRRLAQLKLTDHGCFLNRVIRSQIEMPIDDNVVLNKGDVLQVSGDARRVKTIADRIGFISIHSQVTDLLAFCAFFIIGLMIGMITFQFSNFSFGIGNAAGLLFAGIMLGFLRANHPTFGYIPQGALNMVKEFGLMVFMAGVGLSAGSGINNGLGAVGGQMLIAGLVVSLVPVVICFLFGAYVLRMNRALLFGAMMGARTCAPAMEIISDTARSNIPALGYAGTYAIANVLLTLAGTLIVIIWPGLG</sequence>
<protein>
    <recommendedName>
        <fullName evidence="1">Putative transport protein YbjL</fullName>
    </recommendedName>
</protein>